<proteinExistence type="inferred from homology"/>
<comment type="function">
    <text evidence="1">Regulatory subunit of a potassium efflux system that confers protection against electrophiles. Required for full activity of KefC. Shows redox enzymatic activity, but this enzymatic activity is not required for activation of KefC.</text>
</comment>
<comment type="catalytic activity">
    <reaction evidence="1">
        <text>a quinone + NADH + H(+) = a quinol + NAD(+)</text>
        <dbReference type="Rhea" id="RHEA:46160"/>
        <dbReference type="ChEBI" id="CHEBI:15378"/>
        <dbReference type="ChEBI" id="CHEBI:24646"/>
        <dbReference type="ChEBI" id="CHEBI:57540"/>
        <dbReference type="ChEBI" id="CHEBI:57945"/>
        <dbReference type="ChEBI" id="CHEBI:132124"/>
        <dbReference type="EC" id="1.6.5.2"/>
    </reaction>
</comment>
<comment type="catalytic activity">
    <reaction evidence="1">
        <text>a quinone + NADPH + H(+) = a quinol + NADP(+)</text>
        <dbReference type="Rhea" id="RHEA:46164"/>
        <dbReference type="ChEBI" id="CHEBI:15378"/>
        <dbReference type="ChEBI" id="CHEBI:24646"/>
        <dbReference type="ChEBI" id="CHEBI:57783"/>
        <dbReference type="ChEBI" id="CHEBI:58349"/>
        <dbReference type="ChEBI" id="CHEBI:132124"/>
        <dbReference type="EC" id="1.6.5.2"/>
    </reaction>
</comment>
<comment type="cofactor">
    <cofactor evidence="1">
        <name>FMN</name>
        <dbReference type="ChEBI" id="CHEBI:58210"/>
    </cofactor>
</comment>
<comment type="subunit">
    <text evidence="1">Homodimer. Interacts with KefC.</text>
</comment>
<comment type="subcellular location">
    <subcellularLocation>
        <location evidence="1">Cell inner membrane</location>
        <topology evidence="1">Peripheral membrane protein</topology>
        <orientation evidence="1">Cytoplasmic side</orientation>
    </subcellularLocation>
</comment>
<comment type="similarity">
    <text evidence="1">Belongs to the NAD(P)H dehydrogenase (quinone) family. KefF subfamily.</text>
</comment>
<gene>
    <name evidence="1" type="primary">kefF</name>
    <name type="ordered locus">SPC_0092</name>
</gene>
<reference key="1">
    <citation type="journal article" date="2009" name="PLoS ONE">
        <title>Salmonella paratyphi C: genetic divergence from Salmonella choleraesuis and pathogenic convergence with Salmonella typhi.</title>
        <authorList>
            <person name="Liu W.-Q."/>
            <person name="Feng Y."/>
            <person name="Wang Y."/>
            <person name="Zou Q.-H."/>
            <person name="Chen F."/>
            <person name="Guo J.-T."/>
            <person name="Peng Y.-H."/>
            <person name="Jin Y."/>
            <person name="Li Y.-G."/>
            <person name="Hu S.-N."/>
            <person name="Johnston R.N."/>
            <person name="Liu G.-R."/>
            <person name="Liu S.-L."/>
        </authorList>
    </citation>
    <scope>NUCLEOTIDE SEQUENCE [LARGE SCALE GENOMIC DNA]</scope>
    <source>
        <strain>RKS4594</strain>
    </source>
</reference>
<sequence>MILIIYAHPYPHHSHANKRMLEQAGTLENVEIRSLYHLYPDFNIDVAAEQEALSRASLIVWQHPMQWYSVPPLLKLWMDKVLTHGWAYGHGGTALHGKHLLWAVTTGGGENHFTIGSHPGFDVLSQPLQATALYCGLKWLPPFAMHCTFICDDDTLQAQARQYKQRLLAWQEVNHG</sequence>
<dbReference type="EC" id="1.6.5.2" evidence="1"/>
<dbReference type="EMBL" id="CP000857">
    <property type="protein sequence ID" value="ACN44284.1"/>
    <property type="molecule type" value="Genomic_DNA"/>
</dbReference>
<dbReference type="RefSeq" id="WP_000600710.1">
    <property type="nucleotide sequence ID" value="NC_012125.1"/>
</dbReference>
<dbReference type="SMR" id="C0Q4M9"/>
<dbReference type="KEGG" id="sei:SPC_0092"/>
<dbReference type="HOGENOM" id="CLU_058643_0_2_6"/>
<dbReference type="Proteomes" id="UP000001599">
    <property type="component" value="Chromosome"/>
</dbReference>
<dbReference type="GO" id="GO:0005886">
    <property type="term" value="C:plasma membrane"/>
    <property type="evidence" value="ECO:0007669"/>
    <property type="project" value="UniProtKB-SubCell"/>
</dbReference>
<dbReference type="GO" id="GO:0009055">
    <property type="term" value="F:electron transfer activity"/>
    <property type="evidence" value="ECO:0007669"/>
    <property type="project" value="TreeGrafter"/>
</dbReference>
<dbReference type="GO" id="GO:0010181">
    <property type="term" value="F:FMN binding"/>
    <property type="evidence" value="ECO:0007669"/>
    <property type="project" value="UniProtKB-UniRule"/>
</dbReference>
<dbReference type="GO" id="GO:0050136">
    <property type="term" value="F:NADH:ubiquinone reductase (non-electrogenic) activity"/>
    <property type="evidence" value="ECO:0007669"/>
    <property type="project" value="RHEA"/>
</dbReference>
<dbReference type="GO" id="GO:0008753">
    <property type="term" value="F:NADPH dehydrogenase (quinone) activity"/>
    <property type="evidence" value="ECO:0007669"/>
    <property type="project" value="RHEA"/>
</dbReference>
<dbReference type="GO" id="GO:1901381">
    <property type="term" value="P:positive regulation of potassium ion transmembrane transport"/>
    <property type="evidence" value="ECO:0007669"/>
    <property type="project" value="UniProtKB-UniRule"/>
</dbReference>
<dbReference type="GO" id="GO:0006813">
    <property type="term" value="P:potassium ion transport"/>
    <property type="evidence" value="ECO:0007669"/>
    <property type="project" value="InterPro"/>
</dbReference>
<dbReference type="FunFam" id="3.40.50.360:FF:000008">
    <property type="entry name" value="Glutathione-regulated potassium-efflux system ancillary protein KefF"/>
    <property type="match status" value="1"/>
</dbReference>
<dbReference type="Gene3D" id="3.40.50.360">
    <property type="match status" value="1"/>
</dbReference>
<dbReference type="HAMAP" id="MF_01414">
    <property type="entry name" value="K_H_efflux_KefF"/>
    <property type="match status" value="1"/>
</dbReference>
<dbReference type="InterPro" id="IPR003680">
    <property type="entry name" value="Flavodoxin_fold"/>
</dbReference>
<dbReference type="InterPro" id="IPR029039">
    <property type="entry name" value="Flavoprotein-like_sf"/>
</dbReference>
<dbReference type="InterPro" id="IPR023948">
    <property type="entry name" value="K_H_efflux_KefF"/>
</dbReference>
<dbReference type="InterPro" id="IPR046980">
    <property type="entry name" value="KefG/KefF"/>
</dbReference>
<dbReference type="NCBIfam" id="NF002044">
    <property type="entry name" value="PRK00871.1"/>
    <property type="match status" value="1"/>
</dbReference>
<dbReference type="PANTHER" id="PTHR47307:SF2">
    <property type="entry name" value="GLUTATHIONE-REGULATED POTASSIUM-EFFLUX SYSTEM ANCILLARY PROTEIN KEFF"/>
    <property type="match status" value="1"/>
</dbReference>
<dbReference type="PANTHER" id="PTHR47307">
    <property type="entry name" value="GLUTATHIONE-REGULATED POTASSIUM-EFFLUX SYSTEM ANCILLARY PROTEIN KEFG"/>
    <property type="match status" value="1"/>
</dbReference>
<dbReference type="Pfam" id="PF02525">
    <property type="entry name" value="Flavodoxin_2"/>
    <property type="match status" value="1"/>
</dbReference>
<dbReference type="SUPFAM" id="SSF52218">
    <property type="entry name" value="Flavoproteins"/>
    <property type="match status" value="1"/>
</dbReference>
<evidence type="ECO:0000255" key="1">
    <source>
        <dbReference type="HAMAP-Rule" id="MF_01414"/>
    </source>
</evidence>
<keyword id="KW-0997">Cell inner membrane</keyword>
<keyword id="KW-1003">Cell membrane</keyword>
<keyword id="KW-0285">Flavoprotein</keyword>
<keyword id="KW-0288">FMN</keyword>
<keyword id="KW-0472">Membrane</keyword>
<keyword id="KW-0520">NAD</keyword>
<keyword id="KW-0560">Oxidoreductase</keyword>
<organism>
    <name type="scientific">Salmonella paratyphi C (strain RKS4594)</name>
    <dbReference type="NCBI Taxonomy" id="476213"/>
    <lineage>
        <taxon>Bacteria</taxon>
        <taxon>Pseudomonadati</taxon>
        <taxon>Pseudomonadota</taxon>
        <taxon>Gammaproteobacteria</taxon>
        <taxon>Enterobacterales</taxon>
        <taxon>Enterobacteriaceae</taxon>
        <taxon>Salmonella</taxon>
    </lineage>
</organism>
<feature type="chain" id="PRO_1000184622" description="Glutathione-regulated potassium-efflux system ancillary protein KefF">
    <location>
        <begin position="1"/>
        <end position="176"/>
    </location>
</feature>
<feature type="binding site" evidence="1">
    <location>
        <position position="8"/>
    </location>
    <ligand>
        <name>FMN</name>
        <dbReference type="ChEBI" id="CHEBI:58210"/>
    </ligand>
</feature>
<feature type="binding site" evidence="1">
    <location>
        <begin position="14"/>
        <end position="17"/>
    </location>
    <ligand>
        <name>FMN</name>
        <dbReference type="ChEBI" id="CHEBI:58210"/>
    </ligand>
</feature>
<feature type="binding site" evidence="1">
    <location>
        <begin position="65"/>
        <end position="68"/>
    </location>
    <ligand>
        <name>FMN</name>
        <dbReference type="ChEBI" id="CHEBI:58210"/>
    </ligand>
</feature>
<feature type="binding site" evidence="1">
    <location>
        <begin position="105"/>
        <end position="108"/>
    </location>
    <ligand>
        <name>FMN</name>
        <dbReference type="ChEBI" id="CHEBI:58210"/>
    </ligand>
</feature>
<accession>C0Q4M9</accession>
<name>KEFF_SALPC</name>
<protein>
    <recommendedName>
        <fullName evidence="1">Glutathione-regulated potassium-efflux system ancillary protein KefF</fullName>
    </recommendedName>
    <alternativeName>
        <fullName evidence="1">Quinone oxidoreductase KefF</fullName>
        <ecNumber evidence="1">1.6.5.2</ecNumber>
    </alternativeName>
</protein>